<keyword id="KW-0013">ADP-ribosylation</keyword>
<keyword id="KW-0021">Allosteric enzyme</keyword>
<keyword id="KW-0025">Alternative splicing</keyword>
<keyword id="KW-0053">Apoptosis</keyword>
<keyword id="KW-0158">Chromosome</keyword>
<keyword id="KW-0963">Cytoplasm</keyword>
<keyword id="KW-0227">DNA damage</keyword>
<keyword id="KW-0234">DNA repair</keyword>
<keyword id="KW-0238">DNA-binding</keyword>
<keyword id="KW-0328">Glycosyltransferase</keyword>
<keyword id="KW-0391">Immunity</keyword>
<keyword id="KW-0399">Innate immunity</keyword>
<keyword id="KW-1017">Isopeptide bond</keyword>
<keyword id="KW-0479">Metal-binding</keyword>
<keyword id="KW-0520">NAD</keyword>
<keyword id="KW-0548">Nucleotidyltransferase</keyword>
<keyword id="KW-0539">Nucleus</keyword>
<keyword id="KW-1185">Reference proteome</keyword>
<keyword id="KW-0677">Repeat</keyword>
<keyword id="KW-0804">Transcription</keyword>
<keyword id="KW-0805">Transcription regulation</keyword>
<keyword id="KW-0808">Transferase</keyword>
<keyword id="KW-0862">Zinc</keyword>
<keyword id="KW-0863">Zinc-finger</keyword>
<evidence type="ECO:0000250" key="1">
    <source>
        <dbReference type="UniProtKB" id="P09874"/>
    </source>
</evidence>
<evidence type="ECO:0000250" key="2">
    <source>
        <dbReference type="UniProtKB" id="P11103"/>
    </source>
</evidence>
<evidence type="ECO:0000250" key="3">
    <source>
        <dbReference type="UniProtKB" id="Q9UGN5"/>
    </source>
</evidence>
<evidence type="ECO:0000255" key="4"/>
<evidence type="ECO:0000255" key="5">
    <source>
        <dbReference type="PROSITE-ProRule" id="PRU00033"/>
    </source>
</evidence>
<evidence type="ECO:0000255" key="6">
    <source>
        <dbReference type="PROSITE-ProRule" id="PRU00264"/>
    </source>
</evidence>
<evidence type="ECO:0000255" key="7">
    <source>
        <dbReference type="PROSITE-ProRule" id="PRU00397"/>
    </source>
</evidence>
<evidence type="ECO:0000255" key="8">
    <source>
        <dbReference type="PROSITE-ProRule" id="PRU00398"/>
    </source>
</evidence>
<evidence type="ECO:0000255" key="9">
    <source>
        <dbReference type="PROSITE-ProRule" id="PRU01321"/>
    </source>
</evidence>
<evidence type="ECO:0000255" key="10">
    <source>
        <dbReference type="PROSITE-ProRule" id="PRU01351"/>
    </source>
</evidence>
<evidence type="ECO:0000256" key="11">
    <source>
        <dbReference type="SAM" id="MobiDB-lite"/>
    </source>
</evidence>
<evidence type="ECO:0000269" key="12">
    <source>
    </source>
</evidence>
<evidence type="ECO:0000305" key="13"/>
<evidence type="ECO:0000312" key="14">
    <source>
        <dbReference type="ZFIN" id="ZDB-GENE-030131-3955"/>
    </source>
</evidence>
<organism>
    <name type="scientific">Danio rerio</name>
    <name type="common">Zebrafish</name>
    <name type="synonym">Brachydanio rerio</name>
    <dbReference type="NCBI Taxonomy" id="7955"/>
    <lineage>
        <taxon>Eukaryota</taxon>
        <taxon>Metazoa</taxon>
        <taxon>Chordata</taxon>
        <taxon>Craniata</taxon>
        <taxon>Vertebrata</taxon>
        <taxon>Euteleostomi</taxon>
        <taxon>Actinopterygii</taxon>
        <taxon>Neopterygii</taxon>
        <taxon>Teleostei</taxon>
        <taxon>Ostariophysi</taxon>
        <taxon>Cypriniformes</taxon>
        <taxon>Danionidae</taxon>
        <taxon>Danioninae</taxon>
        <taxon>Danio</taxon>
    </lineage>
</organism>
<dbReference type="EC" id="2.4.2.30" evidence="1"/>
<dbReference type="EC" id="2.4.2.-" evidence="1"/>
<dbReference type="EMBL" id="BX470188">
    <property type="status" value="NOT_ANNOTATED_CDS"/>
    <property type="molecule type" value="Genomic_DNA"/>
</dbReference>
<dbReference type="EMBL" id="BC100001">
    <property type="protein sequence ID" value="AAI00002.1"/>
    <property type="molecule type" value="mRNA"/>
</dbReference>
<dbReference type="RefSeq" id="NP_001038407.1">
    <molecule id="Q5RHR0-1"/>
    <property type="nucleotide sequence ID" value="NM_001044942.1"/>
</dbReference>
<dbReference type="SMR" id="Q5RHR0"/>
<dbReference type="FunCoup" id="Q5RHR0">
    <property type="interactions" value="2019"/>
</dbReference>
<dbReference type="STRING" id="7955.ENSDARP00000008364"/>
<dbReference type="PaxDb" id="7955-ENSDARP00000008364"/>
<dbReference type="Ensembl" id="ENSDART00000017269">
    <molecule id="Q5RHR0-1"/>
    <property type="protein sequence ID" value="ENSDARP00000008364"/>
    <property type="gene ID" value="ENSDARG00000019529"/>
</dbReference>
<dbReference type="GeneID" id="560788"/>
<dbReference type="KEGG" id="dre:560788"/>
<dbReference type="AGR" id="ZFIN:ZDB-GENE-030131-3955"/>
<dbReference type="CTD" id="142"/>
<dbReference type="ZFIN" id="ZDB-GENE-030131-3955">
    <property type="gene designation" value="parp1"/>
</dbReference>
<dbReference type="eggNOG" id="KOG1037">
    <property type="taxonomic scope" value="Eukaryota"/>
</dbReference>
<dbReference type="HOGENOM" id="CLU_004841_0_0_1"/>
<dbReference type="InParanoid" id="Q5RHR0"/>
<dbReference type="OMA" id="MNFKYKY"/>
<dbReference type="OrthoDB" id="429950at2759"/>
<dbReference type="PhylomeDB" id="Q5RHR0"/>
<dbReference type="TreeFam" id="TF316616"/>
<dbReference type="Reactome" id="R-DRE-110362">
    <property type="pathway name" value="POLB-Dependent Long Patch Base Excision Repair"/>
</dbReference>
<dbReference type="Reactome" id="R-DRE-3108214">
    <property type="pathway name" value="SUMOylation of DNA damage response and repair proteins"/>
</dbReference>
<dbReference type="Reactome" id="R-DRE-5696394">
    <property type="pathway name" value="DNA Damage Recognition in GG-NER"/>
</dbReference>
<dbReference type="Reactome" id="R-DRE-5696395">
    <property type="pathway name" value="Formation of Incision Complex in GG-NER"/>
</dbReference>
<dbReference type="Reactome" id="R-DRE-5696400">
    <property type="pathway name" value="Dual Incision in GG-NER"/>
</dbReference>
<dbReference type="PRO" id="PR:Q5RHR0"/>
<dbReference type="Proteomes" id="UP000000437">
    <property type="component" value="Chromosome 20"/>
</dbReference>
<dbReference type="Bgee" id="ENSDARG00000019529">
    <property type="expression patterns" value="Expressed in testis and 23 other cell types or tissues"/>
</dbReference>
<dbReference type="ExpressionAtlas" id="Q5RHR0">
    <property type="expression patterns" value="baseline"/>
</dbReference>
<dbReference type="GO" id="GO:0000785">
    <property type="term" value="C:chromatin"/>
    <property type="evidence" value="ECO:0000250"/>
    <property type="project" value="UniProtKB"/>
</dbReference>
<dbReference type="GO" id="GO:0005829">
    <property type="term" value="C:cytosol"/>
    <property type="evidence" value="ECO:0007669"/>
    <property type="project" value="UniProtKB-SubCell"/>
</dbReference>
<dbReference type="GO" id="GO:0043596">
    <property type="term" value="C:nuclear replication fork"/>
    <property type="evidence" value="ECO:0000250"/>
    <property type="project" value="UniProtKB"/>
</dbReference>
<dbReference type="GO" id="GO:0005730">
    <property type="term" value="C:nucleolus"/>
    <property type="evidence" value="ECO:0000318"/>
    <property type="project" value="GO_Central"/>
</dbReference>
<dbReference type="GO" id="GO:0005634">
    <property type="term" value="C:nucleus"/>
    <property type="evidence" value="ECO:0000250"/>
    <property type="project" value="UniProtKB"/>
</dbReference>
<dbReference type="GO" id="GO:0090734">
    <property type="term" value="C:site of DNA damage"/>
    <property type="evidence" value="ECO:0000250"/>
    <property type="project" value="UniProtKB"/>
</dbReference>
<dbReference type="GO" id="GO:0003684">
    <property type="term" value="F:damaged DNA binding"/>
    <property type="evidence" value="ECO:0000250"/>
    <property type="project" value="UniProtKB"/>
</dbReference>
<dbReference type="GO" id="GO:0003677">
    <property type="term" value="F:DNA binding"/>
    <property type="evidence" value="ECO:0000250"/>
    <property type="project" value="UniProtKB"/>
</dbReference>
<dbReference type="GO" id="GO:0051287">
    <property type="term" value="F:NAD binding"/>
    <property type="evidence" value="ECO:0007669"/>
    <property type="project" value="InterPro"/>
</dbReference>
<dbReference type="GO" id="GO:0003950">
    <property type="term" value="F:NAD+ poly-ADP-ribosyltransferase activity"/>
    <property type="evidence" value="ECO:0000314"/>
    <property type="project" value="UniProtKB"/>
</dbReference>
<dbReference type="GO" id="GO:1990404">
    <property type="term" value="F:NAD+-protein mono-ADP-ribosyltransferase activity"/>
    <property type="evidence" value="ECO:0000314"/>
    <property type="project" value="UniProtKB"/>
</dbReference>
<dbReference type="GO" id="GO:0140806">
    <property type="term" value="F:NAD+-protein-aspartate ADP-ribosyltransferase activity"/>
    <property type="evidence" value="ECO:0000250"/>
    <property type="project" value="UniProtKB"/>
</dbReference>
<dbReference type="GO" id="GO:0140807">
    <property type="term" value="F:NAD+-protein-glutamate ADP-ribosyltransferase activity"/>
    <property type="evidence" value="ECO:0000250"/>
    <property type="project" value="UniProtKB"/>
</dbReference>
<dbReference type="GO" id="GO:0140815">
    <property type="term" value="F:NAD+-protein-histidine ADP-ribosyltransferase activity"/>
    <property type="evidence" value="ECO:0000250"/>
    <property type="project" value="UniProtKB"/>
</dbReference>
<dbReference type="GO" id="GO:0140805">
    <property type="term" value="F:NAD+-protein-serine ADP-ribosyltransferase activity"/>
    <property type="evidence" value="ECO:0000250"/>
    <property type="project" value="UniProtKB"/>
</dbReference>
<dbReference type="GO" id="GO:0140808">
    <property type="term" value="F:NAD+-protein-tyrosine ADP-ribosyltransferase activity"/>
    <property type="evidence" value="ECO:0000250"/>
    <property type="project" value="UniProtKB"/>
</dbReference>
<dbReference type="GO" id="GO:0031491">
    <property type="term" value="F:nucleosome binding"/>
    <property type="evidence" value="ECO:0000250"/>
    <property type="project" value="UniProtKB"/>
</dbReference>
<dbReference type="GO" id="GO:0016779">
    <property type="term" value="F:nucleotidyltransferase activity"/>
    <property type="evidence" value="ECO:0007669"/>
    <property type="project" value="UniProtKB-KW"/>
</dbReference>
<dbReference type="GO" id="GO:0042803">
    <property type="term" value="F:protein homodimerization activity"/>
    <property type="evidence" value="ECO:0000250"/>
    <property type="project" value="UniProtKB"/>
</dbReference>
<dbReference type="GO" id="GO:0008270">
    <property type="term" value="F:zinc ion binding"/>
    <property type="evidence" value="ECO:0000250"/>
    <property type="project" value="UniProtKB"/>
</dbReference>
<dbReference type="GO" id="GO:0006915">
    <property type="term" value="P:apoptotic process"/>
    <property type="evidence" value="ECO:0007669"/>
    <property type="project" value="UniProtKB-KW"/>
</dbReference>
<dbReference type="GO" id="GO:0006281">
    <property type="term" value="P:DNA repair"/>
    <property type="evidence" value="ECO:0000314"/>
    <property type="project" value="UniProtKB"/>
</dbReference>
<dbReference type="GO" id="GO:0006302">
    <property type="term" value="P:double-strand break repair"/>
    <property type="evidence" value="ECO:0000318"/>
    <property type="project" value="GO_Central"/>
</dbReference>
<dbReference type="GO" id="GO:0045087">
    <property type="term" value="P:innate immune response"/>
    <property type="evidence" value="ECO:0007669"/>
    <property type="project" value="UniProtKB-KW"/>
</dbReference>
<dbReference type="GO" id="GO:0045824">
    <property type="term" value="P:negative regulation of innate immune response"/>
    <property type="evidence" value="ECO:0000250"/>
    <property type="project" value="UniProtKB"/>
</dbReference>
<dbReference type="GO" id="GO:0000122">
    <property type="term" value="P:negative regulation of transcription by RNA polymerase II"/>
    <property type="evidence" value="ECO:0000250"/>
    <property type="project" value="UniProtKB"/>
</dbReference>
<dbReference type="GO" id="GO:1903518">
    <property type="term" value="P:positive regulation of single strand break repair"/>
    <property type="evidence" value="ECO:0000318"/>
    <property type="project" value="GO_Central"/>
</dbReference>
<dbReference type="GO" id="GO:0070213">
    <property type="term" value="P:protein auto-ADP-ribosylation"/>
    <property type="evidence" value="ECO:0000250"/>
    <property type="project" value="UniProtKB"/>
</dbReference>
<dbReference type="GO" id="GO:0045187">
    <property type="term" value="P:regulation of circadian sleep/wake cycle, sleep"/>
    <property type="evidence" value="ECO:0000314"/>
    <property type="project" value="UniProtKB"/>
</dbReference>
<dbReference type="GO" id="GO:0071932">
    <property type="term" value="P:replication fork reversal"/>
    <property type="evidence" value="ECO:0000250"/>
    <property type="project" value="UniProtKB"/>
</dbReference>
<dbReference type="CDD" id="cd17747">
    <property type="entry name" value="BRCT_PARP1"/>
    <property type="match status" value="1"/>
</dbReference>
<dbReference type="CDD" id="cd01437">
    <property type="entry name" value="parp_like"/>
    <property type="match status" value="1"/>
</dbReference>
<dbReference type="CDD" id="cd08001">
    <property type="entry name" value="WGR_PARP1_like"/>
    <property type="match status" value="1"/>
</dbReference>
<dbReference type="FunFam" id="1.10.20.130:FF:000001">
    <property type="entry name" value="Poly [ADP-ribose] polymerase"/>
    <property type="match status" value="1"/>
</dbReference>
<dbReference type="FunFam" id="1.20.142.10:FF:000001">
    <property type="entry name" value="Poly [ADP-ribose] polymerase"/>
    <property type="match status" value="1"/>
</dbReference>
<dbReference type="FunFam" id="2.20.25.630:FF:000001">
    <property type="entry name" value="Poly [ADP-ribose] polymerase"/>
    <property type="match status" value="1"/>
</dbReference>
<dbReference type="FunFam" id="3.30.1740.10:FF:000002">
    <property type="entry name" value="Poly [ADP-ribose] polymerase"/>
    <property type="match status" value="1"/>
</dbReference>
<dbReference type="FunFam" id="3.30.1740.10:FF:000003">
    <property type="entry name" value="Poly [ADP-ribose] polymerase"/>
    <property type="match status" value="1"/>
</dbReference>
<dbReference type="FunFam" id="3.40.50.10190:FF:000030">
    <property type="entry name" value="Poly [ADP-ribose] polymerase"/>
    <property type="match status" value="1"/>
</dbReference>
<dbReference type="FunFam" id="3.90.228.10:FF:000002">
    <property type="entry name" value="Poly [ADP-ribose] polymerase"/>
    <property type="match status" value="1"/>
</dbReference>
<dbReference type="Gene3D" id="1.10.20.130">
    <property type="match status" value="1"/>
</dbReference>
<dbReference type="Gene3D" id="2.20.25.630">
    <property type="match status" value="1"/>
</dbReference>
<dbReference type="Gene3D" id="3.90.228.10">
    <property type="match status" value="1"/>
</dbReference>
<dbReference type="Gene3D" id="3.40.50.10190">
    <property type="entry name" value="BRCT domain"/>
    <property type="match status" value="1"/>
</dbReference>
<dbReference type="Gene3D" id="1.20.142.10">
    <property type="entry name" value="Poly(ADP-ribose) polymerase, regulatory domain"/>
    <property type="match status" value="1"/>
</dbReference>
<dbReference type="Gene3D" id="3.30.1740.10">
    <property type="entry name" value="Zinc finger, PARP-type"/>
    <property type="match status" value="2"/>
</dbReference>
<dbReference type="InterPro" id="IPR050800">
    <property type="entry name" value="ARTD/PARP"/>
</dbReference>
<dbReference type="InterPro" id="IPR001357">
    <property type="entry name" value="BRCT_dom"/>
</dbReference>
<dbReference type="InterPro" id="IPR036420">
    <property type="entry name" value="BRCT_dom_sf"/>
</dbReference>
<dbReference type="InterPro" id="IPR038650">
    <property type="entry name" value="PADR1_C_dom_sf"/>
</dbReference>
<dbReference type="InterPro" id="IPR008288">
    <property type="entry name" value="PARP"/>
</dbReference>
<dbReference type="InterPro" id="IPR049296">
    <property type="entry name" value="PARP1-like_PADR1_N"/>
</dbReference>
<dbReference type="InterPro" id="IPR012982">
    <property type="entry name" value="PARP1-like_PADR1_Zn_ribbon"/>
</dbReference>
<dbReference type="InterPro" id="IPR012317">
    <property type="entry name" value="Poly(ADP-ribose)pol_cat_dom"/>
</dbReference>
<dbReference type="InterPro" id="IPR004102">
    <property type="entry name" value="Poly(ADP-ribose)pol_reg_dom"/>
</dbReference>
<dbReference type="InterPro" id="IPR036616">
    <property type="entry name" value="Poly(ADP-ribose)pol_reg_dom_sf"/>
</dbReference>
<dbReference type="InterPro" id="IPR036930">
    <property type="entry name" value="WGR_dom_sf"/>
</dbReference>
<dbReference type="InterPro" id="IPR008893">
    <property type="entry name" value="WGR_domain"/>
</dbReference>
<dbReference type="InterPro" id="IPR001510">
    <property type="entry name" value="Znf_PARP"/>
</dbReference>
<dbReference type="InterPro" id="IPR036957">
    <property type="entry name" value="Znf_PARP_sf"/>
</dbReference>
<dbReference type="PANTHER" id="PTHR10459">
    <property type="entry name" value="DNA LIGASE"/>
    <property type="match status" value="1"/>
</dbReference>
<dbReference type="PANTHER" id="PTHR10459:SF112">
    <property type="entry name" value="POLY [ADP-RIBOSE] POLYMERASE 1"/>
    <property type="match status" value="1"/>
</dbReference>
<dbReference type="Pfam" id="PF00533">
    <property type="entry name" value="BRCT"/>
    <property type="match status" value="1"/>
</dbReference>
<dbReference type="Pfam" id="PF21728">
    <property type="entry name" value="PADR1_N"/>
    <property type="match status" value="1"/>
</dbReference>
<dbReference type="Pfam" id="PF00644">
    <property type="entry name" value="PARP"/>
    <property type="match status" value="1"/>
</dbReference>
<dbReference type="Pfam" id="PF02877">
    <property type="entry name" value="PARP_reg"/>
    <property type="match status" value="1"/>
</dbReference>
<dbReference type="Pfam" id="PF05406">
    <property type="entry name" value="WGR"/>
    <property type="match status" value="1"/>
</dbReference>
<dbReference type="Pfam" id="PF00645">
    <property type="entry name" value="zf-PARP"/>
    <property type="match status" value="2"/>
</dbReference>
<dbReference type="Pfam" id="PF08063">
    <property type="entry name" value="Zn_ribbon_PADR1"/>
    <property type="match status" value="1"/>
</dbReference>
<dbReference type="PIRSF" id="PIRSF000489">
    <property type="entry name" value="NAD_ADPRT"/>
    <property type="match status" value="1"/>
</dbReference>
<dbReference type="SMART" id="SM00292">
    <property type="entry name" value="BRCT"/>
    <property type="match status" value="1"/>
</dbReference>
<dbReference type="SMART" id="SM01335">
    <property type="entry name" value="PADR1"/>
    <property type="match status" value="1"/>
</dbReference>
<dbReference type="SMART" id="SM00773">
    <property type="entry name" value="WGR"/>
    <property type="match status" value="1"/>
</dbReference>
<dbReference type="SMART" id="SM01336">
    <property type="entry name" value="zf-PARP"/>
    <property type="match status" value="2"/>
</dbReference>
<dbReference type="SUPFAM" id="SSF56399">
    <property type="entry name" value="ADP-ribosylation"/>
    <property type="match status" value="1"/>
</dbReference>
<dbReference type="SUPFAM" id="SSF52113">
    <property type="entry name" value="BRCT domain"/>
    <property type="match status" value="1"/>
</dbReference>
<dbReference type="SUPFAM" id="SSF47587">
    <property type="entry name" value="Domain of poly(ADP-ribose) polymerase"/>
    <property type="match status" value="1"/>
</dbReference>
<dbReference type="SUPFAM" id="SSF57716">
    <property type="entry name" value="Glucocorticoid receptor-like (DNA-binding domain)"/>
    <property type="match status" value="2"/>
</dbReference>
<dbReference type="SUPFAM" id="SSF142921">
    <property type="entry name" value="WGR domain-like"/>
    <property type="match status" value="1"/>
</dbReference>
<dbReference type="PROSITE" id="PS50172">
    <property type="entry name" value="BRCT"/>
    <property type="match status" value="1"/>
</dbReference>
<dbReference type="PROSITE" id="PS52007">
    <property type="entry name" value="PADR1"/>
    <property type="match status" value="1"/>
</dbReference>
<dbReference type="PROSITE" id="PS51060">
    <property type="entry name" value="PARP_ALPHA_HD"/>
    <property type="match status" value="1"/>
</dbReference>
<dbReference type="PROSITE" id="PS51059">
    <property type="entry name" value="PARP_CATALYTIC"/>
    <property type="match status" value="1"/>
</dbReference>
<dbReference type="PROSITE" id="PS51977">
    <property type="entry name" value="WGR"/>
    <property type="match status" value="1"/>
</dbReference>
<dbReference type="PROSITE" id="PS00347">
    <property type="entry name" value="ZF_PARP_1"/>
    <property type="match status" value="2"/>
</dbReference>
<dbReference type="PROSITE" id="PS50064">
    <property type="entry name" value="ZF_PARP_2"/>
    <property type="match status" value="2"/>
</dbReference>
<sequence>MADSQDDKLYKAEYAKSGRASCKKCKDNIAKDSLRMAIMVQSPMFDGKVPHWHHFSCFWLRAAVQSPSDISGFTDLRWDDQEKVKTAIESGGATGGKGGQKGAAKGEKTLNDFAVEYAKSNRSTCKGCDQKIEKDQIRVSKKTVDPEKPQLGLIDRWYHTGCFVSRREELIFKPEYSAAQLKGFAVLRDEDKEELKKRLPAVKSEGKRKADEVDGGVSKKQKKEDEKLEQNLKDQSQLIWGIKDKLKKFCSINDMKELLIANSQEVPSGESNIVDRLSDCMAFGSLKPCETCKGQLVFKSDAYYCTGDISAWTKCVFKTQTPDRKDWVTPKEFSEIPFLKKFKFKRQDRVFPKDAPPAAATPSSGSTTSAATSVSSASKNLTEAPADKPLTGMKLLAVGKLSKNKDDLKKFVEDLGGKITGTASKAALCISSKKEIEKMSKKMEEVRDAGVRVVADDFLTDIKESGKALQELISLHAISPWGAEVKVEAPAAAAATKSTGAHSSKSTGKVKEEEGGSKSKKMKLTVKGGAAVDPDSGLENCAHVLEQNGKIYSATLGLVDIVRGTNSYYKLQLLEDDVQKRYWVFRSWGRVGTTIGGNKLDKFYDKNSAMDNFCGVYEEKTGNAWASSNFTKYPNKFYPLEIDYGQDEEAVKKLTQSAGAKSQLEKPVQDLIRMIFDVESMKKAMVEFEIDLQKMPLGKLSKRQIQSAYSLLSEVQQAVADSSSESLILDLSNRFYTLIPHDFGMKKPPLLSNVDYIQQKVQMLDNLLDIEVAYSLLRGGVENNEKDPIDINYEKLKTKIEVVDKSSHEAQLILQYVKNTHAATHNTYTLDVEEIFKIEREGEYQRYRPFKELPNRQLLWHGSRTTNYAGILSQGLRIAPPEAPVTGYMFGKGVYFADMVSKSANYCHTSQADPVGLILLGEVALGNMHELKKASHITKLPKGKHSVKGLGRSAPDPRATVSLNGVDIPLGKGMNTNIDDTSLLYNEYIVYDVSQVNLKYLLKIRFNYQTSLW</sequence>
<comment type="function">
    <text evidence="1 2 12">Poly-ADP-ribosyltransferase that mediates poly-ADP-ribosylation of proteins and plays a key role in DNA repair (PubMed:34798058). Mediates glutamate, aspartate, serine, histidine or tyrosine ADP-ribosylation of proteins: the ADP-D-ribosyl group of NAD(+) is transferred to the acceptor carboxyl group of target residues and further ADP-ribosyl groups are transferred to the 2'-position of the terminal adenosine moiety, building up a polymer with an average chain length of 20-30 units. Serine ADP-ribosylation of proteins constitutes the primary form of ADP-ribosylation of proteins in response to DNA damage (By similarity). Specificity for the different amino acids is conferred by interacting factors, such as hpf1 and nmnat1 (By similarity). Following interaction with hpf1, catalyzes serine ADP-ribosylation of target proteins; hpf1 confers serine specificity by completing the parp1 active site. Also catalyzes tyrosine ADP-ribosylation of target proteins following interaction with hpf1 (By similarity). Following interaction with nmnat1, catalyzes glutamate and aspartate ADP-ribosylation of target proteins; nmnat1 confers glutamate and aspartate specificity (By similarity). Parp1 initiates the repair of DNA breaks: recognizes and binds DNA breaks within chromatin and recruits hpf1, licensing serine ADP-ribosylation of target proteins, such as histones (H2BS6ADPr and H3S10ADPr), thereby promoting decompaction of chromatin and the recruitment of repair factors leading to the reparation of DNA strand breaks. In addition to base excision repair (BER) pathway, also involved in double-strand breaks (DSBs) repair. Mediates the poly-ADP-ribosylation of a number of proteins. In addition to proteins, also able to ADP-ribosylate DNA: catalyzes ADP-ribosylation of DNA strand break termini containing terminal phosphates and a 2'-OH group in single- and double-stranded DNA, respectively (By similarity). Parp1-mediated DNA repair in neurons plays a role in sleep: senses DNA damage in neurons and promotes sleep, facilitating efficient DNA repair (PubMed:34798058). In addition to DNA repair, also involved in other processes, such as transcription regulation, programmed cell death, membrane repair, adipogenesis and innate immunity (By similarity). Acts as a repressor of transcription: binds to nucleosomes and modulates chromatin structure in a manner similar to histone H1, thereby altering RNA polymerase II. Acts both as a positive and negative regulator of transcription elongation, depending on the context (By similarity). Poly-ADP-ribose chains generated by parp1 also play a role in poly-ADP-ribose-dependent cell death, a process named parthanatos. Also acts as a negative regulator of the cGAS-STING pathway by mediating poly-ADP-ribosylation and inactivation of cgas. Acts as a negative regulator of adipogenesis by catalyzing poly ADP-ribosylation of histone H2B on 'Glu-35' (H2BE35ADPr) (By similarity).</text>
</comment>
<comment type="catalytic activity">
    <reaction evidence="1">
        <text>NAD(+) + (ADP-D-ribosyl)n-acceptor = nicotinamide + (ADP-D-ribosyl)n+1-acceptor + H(+).</text>
        <dbReference type="EC" id="2.4.2.30"/>
    </reaction>
</comment>
<comment type="catalytic activity">
    <reaction evidence="1">
        <text>L-seryl-[protein] + NAD(+) = O-(ADP-D-ribosyl)-L-seryl-[protein] + nicotinamide + H(+)</text>
        <dbReference type="Rhea" id="RHEA:58232"/>
        <dbReference type="Rhea" id="RHEA-COMP:9863"/>
        <dbReference type="Rhea" id="RHEA-COMP:15091"/>
        <dbReference type="ChEBI" id="CHEBI:15378"/>
        <dbReference type="ChEBI" id="CHEBI:17154"/>
        <dbReference type="ChEBI" id="CHEBI:29999"/>
        <dbReference type="ChEBI" id="CHEBI:57540"/>
        <dbReference type="ChEBI" id="CHEBI:142556"/>
    </reaction>
    <physiologicalReaction direction="left-to-right" evidence="1">
        <dbReference type="Rhea" id="RHEA:58233"/>
    </physiologicalReaction>
</comment>
<comment type="catalytic activity">
    <reaction evidence="2">
        <text>L-aspartyl-[protein] + NAD(+) = 4-O-(ADP-D-ribosyl)-L-aspartyl-[protein] + nicotinamide</text>
        <dbReference type="Rhea" id="RHEA:54424"/>
        <dbReference type="Rhea" id="RHEA-COMP:9867"/>
        <dbReference type="Rhea" id="RHEA-COMP:13832"/>
        <dbReference type="ChEBI" id="CHEBI:17154"/>
        <dbReference type="ChEBI" id="CHEBI:29961"/>
        <dbReference type="ChEBI" id="CHEBI:57540"/>
        <dbReference type="ChEBI" id="CHEBI:138102"/>
    </reaction>
    <physiologicalReaction direction="left-to-right" evidence="2">
        <dbReference type="Rhea" id="RHEA:54425"/>
    </physiologicalReaction>
</comment>
<comment type="catalytic activity">
    <reaction evidence="2">
        <text>L-glutamyl-[protein] + NAD(+) = 5-O-(ADP-D-ribosyl)-L-glutamyl-[protein] + nicotinamide</text>
        <dbReference type="Rhea" id="RHEA:58224"/>
        <dbReference type="Rhea" id="RHEA-COMP:10208"/>
        <dbReference type="Rhea" id="RHEA-COMP:15089"/>
        <dbReference type="ChEBI" id="CHEBI:17154"/>
        <dbReference type="ChEBI" id="CHEBI:29973"/>
        <dbReference type="ChEBI" id="CHEBI:57540"/>
        <dbReference type="ChEBI" id="CHEBI:142540"/>
    </reaction>
    <physiologicalReaction direction="left-to-right" evidence="2">
        <dbReference type="Rhea" id="RHEA:58225"/>
    </physiologicalReaction>
</comment>
<comment type="catalytic activity">
    <reaction evidence="1">
        <text>L-tyrosyl-[protein] + NAD(+) = O-(ADP-D-ribosyl)-L-tyrosyl-[protein] + nicotinamide + H(+)</text>
        <dbReference type="Rhea" id="RHEA:58236"/>
        <dbReference type="Rhea" id="RHEA-COMP:10136"/>
        <dbReference type="Rhea" id="RHEA-COMP:15092"/>
        <dbReference type="ChEBI" id="CHEBI:15378"/>
        <dbReference type="ChEBI" id="CHEBI:17154"/>
        <dbReference type="ChEBI" id="CHEBI:46858"/>
        <dbReference type="ChEBI" id="CHEBI:57540"/>
        <dbReference type="ChEBI" id="CHEBI:142557"/>
    </reaction>
    <physiologicalReaction direction="left-to-right" evidence="1">
        <dbReference type="Rhea" id="RHEA:58237"/>
    </physiologicalReaction>
</comment>
<comment type="catalytic activity">
    <reaction evidence="1">
        <text>L-histidyl-[protein] + NAD(+) = N(tele)-(ADP-D-ribosyl)-L-histidyl-[protein] + nicotinamide + H(+)</text>
        <dbReference type="Rhea" id="RHEA:72071"/>
        <dbReference type="Rhea" id="RHEA-COMP:9745"/>
        <dbReference type="Rhea" id="RHEA-COMP:18085"/>
        <dbReference type="ChEBI" id="CHEBI:15378"/>
        <dbReference type="ChEBI" id="CHEBI:17154"/>
        <dbReference type="ChEBI" id="CHEBI:29979"/>
        <dbReference type="ChEBI" id="CHEBI:57540"/>
        <dbReference type="ChEBI" id="CHEBI:191398"/>
    </reaction>
    <physiologicalReaction direction="left-to-right" evidence="1">
        <dbReference type="Rhea" id="RHEA:72072"/>
    </physiologicalReaction>
</comment>
<comment type="activity regulation">
    <text evidence="1">ADP-ribosyltransferase activity is regulated via an allosteric activation mechanism. In absence of activation signal, parp1 is autoinhibited by the PARP alpha-helical domain (also named HD region), which prevents effective NAD(+)-binding. Activity is highly stimulated by signals, such as DNA strand breaks. Binding to damaged DNA unfolds the PARP alpha-helical domain, relieving autoinhibition. Poly-ADP-ribosyltransferase activity is tightly regulated and parp1 is removed from damaged chromatin following initial poly-ADP-ribosylation of chromatin to avoid prolonged residence (trapping) that has cytotoxic consequences. A number of factors or post-translational modifications (auto-poly-ADP-ribosylation) promote parp1 removal from chromatin.</text>
</comment>
<comment type="subunit">
    <text evidence="1">Homodimer; PARP-type zinc-fingers from separate parp1 molecules form a dimer module that specifically recognizes DNA strand breaks.</text>
</comment>
<comment type="subcellular location">
    <subcellularLocation>
        <location evidence="1">Chromosome</location>
    </subcellularLocation>
    <subcellularLocation>
        <location evidence="1">Nucleus</location>
    </subcellularLocation>
    <subcellularLocation>
        <location evidence="1">Nucleus</location>
        <location evidence="1">Nucleolus</location>
    </subcellularLocation>
    <subcellularLocation>
        <location evidence="1">Cytoplasm</location>
        <location evidence="1">Cytosol</location>
    </subcellularLocation>
    <text evidence="1">Localizes to sites of DNA damage. Recognizes (via PARP-type zinc-fingers) and binds DNA strand breaks. Also binds normal/undamaged chromatin. Auto poly-ADP-ribosylation promotes dissociation from chromatin.</text>
</comment>
<comment type="alternative products">
    <event type="alternative splicing"/>
    <isoform>
        <id>Q5RHR0-1</id>
        <name>1</name>
        <sequence type="displayed"/>
    </isoform>
    <isoform>
        <id>Q5RHR0-2</id>
        <name>2</name>
        <sequence type="described" ref="VSP_061614"/>
    </isoform>
</comment>
<comment type="domain">
    <text evidence="1">The two PARP-type zinc-fingers (also named Zn1 and Zn2) specifically recognize DNA strand breaks: PARP-type zinc-finger 1 binds PARP-type zinc-finger 2 from a separate parp1 molecule to form a dimeric module that specifically recognizes DNA strand breaks.</text>
</comment>
<comment type="domain">
    <text evidence="1">The PADR1-type (also named Zn3) zinc-finger mediates an interdomain contact and is required for the ability of parp1 to regulate chromatin structure.</text>
</comment>
<comment type="domain">
    <text evidence="1">The BRCT domain is able to bind intact DNA without activating the poly-ADP-ribosyltransferase activity. The BRCT domain mediates DNA intrastrand transfer (named 'monkey-bar mechanism') that allows rapid movements of parp1 through the nucleus.</text>
</comment>
<comment type="domain">
    <text evidence="3">The WGR domain bridges two nucleosomes, with the broken DNA aligned in a position suitable for ligation. The bridging induces structural changes in parp1 that signal the recognition of a DNA break to the catalytic domain of parp1.</text>
</comment>
<comment type="domain">
    <text evidence="1">The PARP alpha-helical domain (also named HD region) prevents effective NAD(+)-binding in absence of activation signal. Binding to damaged DNA unfolds the PARP alpha-helical domain, relieving autoinhibition.</text>
</comment>
<comment type="PTM">
    <text evidence="1">Poly-ADP-ribosylated on serine, glutamate and aspartate residues by autocatalysis. Auto-ADP-ribosylation on serine takes place following interaction with HPF1. Auto poly-ADP-ribosylation on serine residues promotes its dissociation from chromatin.</text>
</comment>
<comment type="similarity">
    <text evidence="10 13">Belongs to the ARTD/PARP family.</text>
</comment>
<reference key="1">
    <citation type="journal article" date="2013" name="Nature">
        <title>The zebrafish reference genome sequence and its relationship to the human genome.</title>
        <authorList>
            <person name="Howe K."/>
            <person name="Clark M.D."/>
            <person name="Torroja C.F."/>
            <person name="Torrance J."/>
            <person name="Berthelot C."/>
            <person name="Muffato M."/>
            <person name="Collins J.E."/>
            <person name="Humphray S."/>
            <person name="McLaren K."/>
            <person name="Matthews L."/>
            <person name="McLaren S."/>
            <person name="Sealy I."/>
            <person name="Caccamo M."/>
            <person name="Churcher C."/>
            <person name="Scott C."/>
            <person name="Barrett J.C."/>
            <person name="Koch R."/>
            <person name="Rauch G.J."/>
            <person name="White S."/>
            <person name="Chow W."/>
            <person name="Kilian B."/>
            <person name="Quintais L.T."/>
            <person name="Guerra-Assuncao J.A."/>
            <person name="Zhou Y."/>
            <person name="Gu Y."/>
            <person name="Yen J."/>
            <person name="Vogel J.H."/>
            <person name="Eyre T."/>
            <person name="Redmond S."/>
            <person name="Banerjee R."/>
            <person name="Chi J."/>
            <person name="Fu B."/>
            <person name="Langley E."/>
            <person name="Maguire S.F."/>
            <person name="Laird G.K."/>
            <person name="Lloyd D."/>
            <person name="Kenyon E."/>
            <person name="Donaldson S."/>
            <person name="Sehra H."/>
            <person name="Almeida-King J."/>
            <person name="Loveland J."/>
            <person name="Trevanion S."/>
            <person name="Jones M."/>
            <person name="Quail M."/>
            <person name="Willey D."/>
            <person name="Hunt A."/>
            <person name="Burton J."/>
            <person name="Sims S."/>
            <person name="McLay K."/>
            <person name="Plumb B."/>
            <person name="Davis J."/>
            <person name="Clee C."/>
            <person name="Oliver K."/>
            <person name="Clark R."/>
            <person name="Riddle C."/>
            <person name="Elliot D."/>
            <person name="Threadgold G."/>
            <person name="Harden G."/>
            <person name="Ware D."/>
            <person name="Begum S."/>
            <person name="Mortimore B."/>
            <person name="Kerry G."/>
            <person name="Heath P."/>
            <person name="Phillimore B."/>
            <person name="Tracey A."/>
            <person name="Corby N."/>
            <person name="Dunn M."/>
            <person name="Johnson C."/>
            <person name="Wood J."/>
            <person name="Clark S."/>
            <person name="Pelan S."/>
            <person name="Griffiths G."/>
            <person name="Smith M."/>
            <person name="Glithero R."/>
            <person name="Howden P."/>
            <person name="Barker N."/>
            <person name="Lloyd C."/>
            <person name="Stevens C."/>
            <person name="Harley J."/>
            <person name="Holt K."/>
            <person name="Panagiotidis G."/>
            <person name="Lovell J."/>
            <person name="Beasley H."/>
            <person name="Henderson C."/>
            <person name="Gordon D."/>
            <person name="Auger K."/>
            <person name="Wright D."/>
            <person name="Collins J."/>
            <person name="Raisen C."/>
            <person name="Dyer L."/>
            <person name="Leung K."/>
            <person name="Robertson L."/>
            <person name="Ambridge K."/>
            <person name="Leongamornlert D."/>
            <person name="McGuire S."/>
            <person name="Gilderthorp R."/>
            <person name="Griffiths C."/>
            <person name="Manthravadi D."/>
            <person name="Nichol S."/>
            <person name="Barker G."/>
            <person name="Whitehead S."/>
            <person name="Kay M."/>
            <person name="Brown J."/>
            <person name="Murnane C."/>
            <person name="Gray E."/>
            <person name="Humphries M."/>
            <person name="Sycamore N."/>
            <person name="Barker D."/>
            <person name="Saunders D."/>
            <person name="Wallis J."/>
            <person name="Babbage A."/>
            <person name="Hammond S."/>
            <person name="Mashreghi-Mohammadi M."/>
            <person name="Barr L."/>
            <person name="Martin S."/>
            <person name="Wray P."/>
            <person name="Ellington A."/>
            <person name="Matthews N."/>
            <person name="Ellwood M."/>
            <person name="Woodmansey R."/>
            <person name="Clark G."/>
            <person name="Cooper J."/>
            <person name="Tromans A."/>
            <person name="Grafham D."/>
            <person name="Skuce C."/>
            <person name="Pandian R."/>
            <person name="Andrews R."/>
            <person name="Harrison E."/>
            <person name="Kimberley A."/>
            <person name="Garnett J."/>
            <person name="Fosker N."/>
            <person name="Hall R."/>
            <person name="Garner P."/>
            <person name="Kelly D."/>
            <person name="Bird C."/>
            <person name="Palmer S."/>
            <person name="Gehring I."/>
            <person name="Berger A."/>
            <person name="Dooley C.M."/>
            <person name="Ersan-Urun Z."/>
            <person name="Eser C."/>
            <person name="Geiger H."/>
            <person name="Geisler M."/>
            <person name="Karotki L."/>
            <person name="Kirn A."/>
            <person name="Konantz J."/>
            <person name="Konantz M."/>
            <person name="Oberlander M."/>
            <person name="Rudolph-Geiger S."/>
            <person name="Teucke M."/>
            <person name="Lanz C."/>
            <person name="Raddatz G."/>
            <person name="Osoegawa K."/>
            <person name="Zhu B."/>
            <person name="Rapp A."/>
            <person name="Widaa S."/>
            <person name="Langford C."/>
            <person name="Yang F."/>
            <person name="Schuster S.C."/>
            <person name="Carter N.P."/>
            <person name="Harrow J."/>
            <person name="Ning Z."/>
            <person name="Herrero J."/>
            <person name="Searle S.M."/>
            <person name="Enright A."/>
            <person name="Geisler R."/>
            <person name="Plasterk R.H."/>
            <person name="Lee C."/>
            <person name="Westerfield M."/>
            <person name="de Jong P.J."/>
            <person name="Zon L.I."/>
            <person name="Postlethwait J.H."/>
            <person name="Nusslein-Volhard C."/>
            <person name="Hubbard T.J."/>
            <person name="Roest Crollius H."/>
            <person name="Rogers J."/>
            <person name="Stemple D.L."/>
        </authorList>
    </citation>
    <scope>NUCLEOTIDE SEQUENCE [LARGE SCALE GENOMIC DNA]</scope>
    <source>
        <strain>Tuebingen</strain>
    </source>
</reference>
<reference key="2">
    <citation type="submission" date="2005-08" db="EMBL/GenBank/DDBJ databases">
        <authorList>
            <consortium name="NIH - Zebrafish Gene Collection (ZGC) project"/>
        </authorList>
    </citation>
    <scope>NUCLEOTIDE SEQUENCE [LARGE SCALE MRNA] (ISOFORM 2)</scope>
    <source>
        <tissue>Embryo</tissue>
    </source>
</reference>
<reference key="3">
    <citation type="journal article" date="2021" name="Mol. Cell">
        <title>Parp1 promotes sleep, which enhances DNA repair in neurons.</title>
        <authorList>
            <person name="Zada D."/>
            <person name="Sela Y."/>
            <person name="Matosevich N."/>
            <person name="Monsonego A."/>
            <person name="Lerer-Goldshtein T."/>
            <person name="Nir Y."/>
            <person name="Appelbaum L."/>
        </authorList>
    </citation>
    <scope>FUNCTION</scope>
</reference>
<name>PARP1_DANRE</name>
<protein>
    <recommendedName>
        <fullName>Poly [ADP-ribose] polymerase 1</fullName>
        <shortName>PARP-1</shortName>
        <ecNumber evidence="1">2.4.2.30</ecNumber>
    </recommendedName>
    <alternativeName>
        <fullName>ADP-ribosyltransferase diphtheria toxin-like 1</fullName>
        <shortName>ARTD1</shortName>
    </alternativeName>
    <alternativeName>
        <fullName>DNA ADP-ribosyltransferase PARP1</fullName>
        <ecNumber evidence="1">2.4.2.-</ecNumber>
    </alternativeName>
    <alternativeName>
        <fullName>NAD(+) ADP-ribosyltransferase 1</fullName>
        <shortName>ADPRT 1</shortName>
    </alternativeName>
    <alternativeName>
        <fullName>Poly[ADP-ribose] synthase 1</fullName>
    </alternativeName>
    <alternativeName>
        <fullName>Protein poly-ADP-ribosyltransferase PARP1</fullName>
        <ecNumber evidence="1">2.4.2.-</ecNumber>
    </alternativeName>
</protein>
<proteinExistence type="evidence at transcript level"/>
<accession>Q5RHR0</accession>
<accession>Q499A8</accession>
<gene>
    <name evidence="14" type="primary">parp1</name>
</gene>
<feature type="chain" id="PRO_0000456367" description="Poly [ADP-ribose] polymerase 1">
    <location>
        <begin position="1"/>
        <end position="1013"/>
    </location>
</feature>
<feature type="domain" description="PADR1 zinc-binding" evidence="10">
    <location>
        <begin position="219"/>
        <end position="353"/>
    </location>
</feature>
<feature type="domain" description="BRCT" evidence="5">
    <location>
        <begin position="385"/>
        <end position="461"/>
    </location>
</feature>
<feature type="domain" description="WGR" evidence="9">
    <location>
        <begin position="541"/>
        <end position="637"/>
    </location>
</feature>
<feature type="domain" description="PARP alpha-helical" evidence="8">
    <location>
        <begin position="661"/>
        <end position="778"/>
    </location>
</feature>
<feature type="domain" description="PARP catalytic" evidence="7">
    <location>
        <begin position="787"/>
        <end position="1013"/>
    </location>
</feature>
<feature type="zinc finger region" description="PARP-type 1" evidence="6">
    <location>
        <begin position="10"/>
        <end position="92"/>
    </location>
</feature>
<feature type="zinc finger region" description="PARP-type 2" evidence="6">
    <location>
        <begin position="113"/>
        <end position="203"/>
    </location>
</feature>
<feature type="region of interest" description="Disordered" evidence="11">
    <location>
        <begin position="202"/>
        <end position="228"/>
    </location>
</feature>
<feature type="region of interest" description="Zinc ribbon" evidence="10">
    <location>
        <begin position="284"/>
        <end position="326"/>
    </location>
</feature>
<feature type="region of interest" description="Disordered" evidence="11">
    <location>
        <begin position="353"/>
        <end position="385"/>
    </location>
</feature>
<feature type="region of interest" description="Automodification domain" evidence="1">
    <location>
        <begin position="365"/>
        <end position="523"/>
    </location>
</feature>
<feature type="region of interest" description="Disordered" evidence="11">
    <location>
        <begin position="494"/>
        <end position="522"/>
    </location>
</feature>
<feature type="short sequence motif" description="Nuclear localization signal" evidence="1">
    <location>
        <begin position="207"/>
        <end position="209"/>
    </location>
</feature>
<feature type="compositionally biased region" description="Low complexity" evidence="11">
    <location>
        <begin position="356"/>
        <end position="378"/>
    </location>
</feature>
<feature type="compositionally biased region" description="Low complexity" evidence="11">
    <location>
        <begin position="494"/>
        <end position="507"/>
    </location>
</feature>
<feature type="active site" description="For poly [ADP-ribose] polymerase activity" evidence="1">
    <location>
        <position position="987"/>
    </location>
</feature>
<feature type="binding site" evidence="6">
    <location>
        <position position="22"/>
    </location>
    <ligand>
        <name>Zn(2+)</name>
        <dbReference type="ChEBI" id="CHEBI:29105"/>
        <label>1</label>
    </ligand>
</feature>
<feature type="binding site" evidence="6">
    <location>
        <position position="25"/>
    </location>
    <ligand>
        <name>Zn(2+)</name>
        <dbReference type="ChEBI" id="CHEBI:29105"/>
        <label>1</label>
    </ligand>
</feature>
<feature type="binding site" evidence="6">
    <location>
        <position position="54"/>
    </location>
    <ligand>
        <name>Zn(2+)</name>
        <dbReference type="ChEBI" id="CHEBI:29105"/>
        <label>1</label>
    </ligand>
</feature>
<feature type="binding site" evidence="6">
    <location>
        <position position="57"/>
    </location>
    <ligand>
        <name>Zn(2+)</name>
        <dbReference type="ChEBI" id="CHEBI:29105"/>
        <label>1</label>
    </ligand>
</feature>
<feature type="binding site" evidence="6">
    <location>
        <position position="125"/>
    </location>
    <ligand>
        <name>Zn(2+)</name>
        <dbReference type="ChEBI" id="CHEBI:29105"/>
        <label>2</label>
    </ligand>
</feature>
<feature type="binding site" evidence="6">
    <location>
        <position position="128"/>
    </location>
    <ligand>
        <name>Zn(2+)</name>
        <dbReference type="ChEBI" id="CHEBI:29105"/>
        <label>2</label>
    </ligand>
</feature>
<feature type="binding site" evidence="6">
    <location>
        <position position="159"/>
    </location>
    <ligand>
        <name>Zn(2+)</name>
        <dbReference type="ChEBI" id="CHEBI:29105"/>
        <label>2</label>
    </ligand>
</feature>
<feature type="binding site" evidence="6">
    <location>
        <position position="162"/>
    </location>
    <ligand>
        <name>Zn(2+)</name>
        <dbReference type="ChEBI" id="CHEBI:29105"/>
        <label>2</label>
    </ligand>
</feature>
<feature type="binding site" evidence="10">
    <location>
        <position position="289"/>
    </location>
    <ligand>
        <name>Zn(2+)</name>
        <dbReference type="ChEBI" id="CHEBI:29105"/>
        <label>3</label>
    </ligand>
</feature>
<feature type="binding site" evidence="10">
    <location>
        <position position="292"/>
    </location>
    <ligand>
        <name>Zn(2+)</name>
        <dbReference type="ChEBI" id="CHEBI:29105"/>
        <label>3</label>
    </ligand>
</feature>
<feature type="binding site" evidence="10">
    <location>
        <position position="305"/>
    </location>
    <ligand>
        <name>Zn(2+)</name>
        <dbReference type="ChEBI" id="CHEBI:29105"/>
        <label>3</label>
    </ligand>
</feature>
<feature type="binding site" evidence="10">
    <location>
        <position position="315"/>
    </location>
    <ligand>
        <name>Zn(2+)</name>
        <dbReference type="ChEBI" id="CHEBI:29105"/>
        <label>3</label>
    </ligand>
</feature>
<feature type="binding site" evidence="3">
    <location>
        <begin position="861"/>
        <end position="863"/>
    </location>
    <ligand>
        <name>NAD(+)</name>
        <dbReference type="ChEBI" id="CHEBI:57540"/>
    </ligand>
</feature>
<feature type="binding site" evidence="3">
    <location>
        <position position="870"/>
    </location>
    <ligand>
        <name>NAD(+)</name>
        <dbReference type="ChEBI" id="CHEBI:57540"/>
    </ligand>
</feature>
<feature type="binding site" evidence="3">
    <location>
        <position position="877"/>
    </location>
    <ligand>
        <name>NAD(+)</name>
        <dbReference type="ChEBI" id="CHEBI:57540"/>
    </ligand>
</feature>
<feature type="binding site" evidence="3">
    <location>
        <position position="903"/>
    </location>
    <ligand>
        <name>NAD(+)</name>
        <dbReference type="ChEBI" id="CHEBI:57540"/>
    </ligand>
</feature>
<feature type="modified residue" description="PolyADP-ribosyl glutamic acid" evidence="4">
    <location>
        <position position="413"/>
    </location>
</feature>
<feature type="modified residue" description="PolyADP-ribosyl glutamic acid" evidence="4">
    <location>
        <position position="435"/>
    </location>
</feature>
<feature type="modified residue" description="PolyADP-ribosyl glutamic acid" evidence="4">
    <location>
        <position position="444"/>
    </location>
</feature>
<feature type="modified residue" description="PolyADP-ribosyl glutamic acid" evidence="4">
    <location>
        <position position="445"/>
    </location>
</feature>
<feature type="modified residue" description="PolyADP-ribosyl glutamic acid" evidence="4">
    <location>
        <position position="464"/>
    </location>
</feature>
<feature type="modified residue" description="PolyADP-ribosyl glutamic acid" evidence="4">
    <location>
        <position position="471"/>
    </location>
</feature>
<feature type="modified residue" description="PolyADP-ribosyl glutamic acid" evidence="4">
    <location>
        <position position="484"/>
    </location>
</feature>
<feature type="modified residue" description="PolyADP-ribosyl glutamic acid" evidence="4">
    <location>
        <position position="488"/>
    </location>
</feature>
<feature type="modified residue" description="PolyADP-ribosyl glutamic acid" evidence="4">
    <location>
        <position position="512"/>
    </location>
</feature>
<feature type="modified residue" description="PolyADP-ribosyl glutamic acid" evidence="4">
    <location>
        <position position="513"/>
    </location>
</feature>
<feature type="splice variant" id="VSP_061614" description="In isoform 2.">
    <location>
        <begin position="135"/>
        <end position="136"/>
    </location>
</feature>